<feature type="chain" id="PRO_1000129042" description="Peptidase T">
    <location>
        <begin position="1"/>
        <end position="409"/>
    </location>
</feature>
<feature type="active site" evidence="1">
    <location>
        <position position="80"/>
    </location>
</feature>
<feature type="active site" description="Proton acceptor" evidence="1">
    <location>
        <position position="173"/>
    </location>
</feature>
<feature type="binding site" evidence="1">
    <location>
        <position position="78"/>
    </location>
    <ligand>
        <name>Zn(2+)</name>
        <dbReference type="ChEBI" id="CHEBI:29105"/>
        <label>1</label>
    </ligand>
</feature>
<feature type="binding site" evidence="1">
    <location>
        <position position="140"/>
    </location>
    <ligand>
        <name>Zn(2+)</name>
        <dbReference type="ChEBI" id="CHEBI:29105"/>
        <label>1</label>
    </ligand>
</feature>
<feature type="binding site" evidence="1">
    <location>
        <position position="140"/>
    </location>
    <ligand>
        <name>Zn(2+)</name>
        <dbReference type="ChEBI" id="CHEBI:29105"/>
        <label>2</label>
    </ligand>
</feature>
<feature type="binding site" evidence="1">
    <location>
        <position position="174"/>
    </location>
    <ligand>
        <name>Zn(2+)</name>
        <dbReference type="ChEBI" id="CHEBI:29105"/>
        <label>2</label>
    </ligand>
</feature>
<feature type="binding site" evidence="1">
    <location>
        <position position="196"/>
    </location>
    <ligand>
        <name>Zn(2+)</name>
        <dbReference type="ChEBI" id="CHEBI:29105"/>
        <label>1</label>
    </ligand>
</feature>
<feature type="binding site" evidence="1">
    <location>
        <position position="379"/>
    </location>
    <ligand>
        <name>Zn(2+)</name>
        <dbReference type="ChEBI" id="CHEBI:29105"/>
        <label>2</label>
    </ligand>
</feature>
<organism>
    <name type="scientific">Salmonella heidelberg (strain SL476)</name>
    <dbReference type="NCBI Taxonomy" id="454169"/>
    <lineage>
        <taxon>Bacteria</taxon>
        <taxon>Pseudomonadati</taxon>
        <taxon>Pseudomonadota</taxon>
        <taxon>Gammaproteobacteria</taxon>
        <taxon>Enterobacterales</taxon>
        <taxon>Enterobacteriaceae</taxon>
        <taxon>Salmonella</taxon>
    </lineage>
</organism>
<gene>
    <name evidence="1" type="primary">pepT</name>
    <name type="ordered locus">SeHA_C1344</name>
</gene>
<evidence type="ECO:0000255" key="1">
    <source>
        <dbReference type="HAMAP-Rule" id="MF_00550"/>
    </source>
</evidence>
<accession>B4TFK5</accession>
<name>PEPT_SALHS</name>
<reference key="1">
    <citation type="journal article" date="2011" name="J. Bacteriol.">
        <title>Comparative genomics of 28 Salmonella enterica isolates: evidence for CRISPR-mediated adaptive sublineage evolution.</title>
        <authorList>
            <person name="Fricke W.F."/>
            <person name="Mammel M.K."/>
            <person name="McDermott P.F."/>
            <person name="Tartera C."/>
            <person name="White D.G."/>
            <person name="Leclerc J.E."/>
            <person name="Ravel J."/>
            <person name="Cebula T.A."/>
        </authorList>
    </citation>
    <scope>NUCLEOTIDE SEQUENCE [LARGE SCALE GENOMIC DNA]</scope>
    <source>
        <strain>SL476</strain>
    </source>
</reference>
<sequence length="409" mass="44849">MDKLLERFLHYVSLDTQSKSGVRQVPSTEGQWKLLRLLKQQLEEMGLVNITLSEKGTLMATLPANVEGDIPAIGFISHVDTSPDFSGKNVNPQIVENYRGGDIALGIGDEVLSPVMFPVLHQLLGQTLITTDGKTLLGADDKAGVAEIMTALAVLKGNPIPHGDIKVAFTPDEEVGKGAKHFDVEAFGAQWAYTVDGGGVGELEFENFNAASVNIKIVGNNVHPGTAKGVMVNALSLAARIHAEVPADEAPETTEGYEGFYHLASMKGTVDRAEMHYIIRDFDRKQFEARKRKMMEIAKKVGKGLHPDCYIELVIEDSYYNMREKVVEHPHILDIAQQAMRDCHITPEMKPIRGGTDGAQLSFMGLPCPNLFTGGYNYHGKHEFVTLEGMEKAVQVIVRIAELTAKRGQ</sequence>
<comment type="function">
    <text evidence="1">Cleaves the N-terminal amino acid of tripeptides.</text>
</comment>
<comment type="catalytic activity">
    <reaction evidence="1">
        <text>Release of the N-terminal residue from a tripeptide.</text>
        <dbReference type="EC" id="3.4.11.4"/>
    </reaction>
</comment>
<comment type="cofactor">
    <cofactor evidence="1">
        <name>Zn(2+)</name>
        <dbReference type="ChEBI" id="CHEBI:29105"/>
    </cofactor>
    <text evidence="1">Binds 2 Zn(2+) ions per subunit.</text>
</comment>
<comment type="subcellular location">
    <subcellularLocation>
        <location evidence="1">Cytoplasm</location>
    </subcellularLocation>
</comment>
<comment type="similarity">
    <text evidence="1">Belongs to the peptidase M20B family.</text>
</comment>
<dbReference type="EC" id="3.4.11.4" evidence="1"/>
<dbReference type="EMBL" id="CP001120">
    <property type="protein sequence ID" value="ACF66192.1"/>
    <property type="molecule type" value="Genomic_DNA"/>
</dbReference>
<dbReference type="RefSeq" id="WP_000359410.1">
    <property type="nucleotide sequence ID" value="NC_011083.1"/>
</dbReference>
<dbReference type="SMR" id="B4TFK5"/>
<dbReference type="MEROPS" id="M20.003"/>
<dbReference type="KEGG" id="seh:SeHA_C1344"/>
<dbReference type="HOGENOM" id="CLU_053676_0_0_6"/>
<dbReference type="Proteomes" id="UP000001866">
    <property type="component" value="Chromosome"/>
</dbReference>
<dbReference type="GO" id="GO:0005829">
    <property type="term" value="C:cytosol"/>
    <property type="evidence" value="ECO:0007669"/>
    <property type="project" value="TreeGrafter"/>
</dbReference>
<dbReference type="GO" id="GO:0008237">
    <property type="term" value="F:metallopeptidase activity"/>
    <property type="evidence" value="ECO:0007669"/>
    <property type="project" value="UniProtKB-KW"/>
</dbReference>
<dbReference type="GO" id="GO:0045148">
    <property type="term" value="F:tripeptide aminopeptidase activity"/>
    <property type="evidence" value="ECO:0007669"/>
    <property type="project" value="UniProtKB-UniRule"/>
</dbReference>
<dbReference type="GO" id="GO:0008270">
    <property type="term" value="F:zinc ion binding"/>
    <property type="evidence" value="ECO:0007669"/>
    <property type="project" value="UniProtKB-UniRule"/>
</dbReference>
<dbReference type="GO" id="GO:0043171">
    <property type="term" value="P:peptide catabolic process"/>
    <property type="evidence" value="ECO:0007669"/>
    <property type="project" value="UniProtKB-UniRule"/>
</dbReference>
<dbReference type="GO" id="GO:0006508">
    <property type="term" value="P:proteolysis"/>
    <property type="evidence" value="ECO:0007669"/>
    <property type="project" value="UniProtKB-UniRule"/>
</dbReference>
<dbReference type="CDD" id="cd03892">
    <property type="entry name" value="M20_peptT"/>
    <property type="match status" value="1"/>
</dbReference>
<dbReference type="FunFam" id="3.30.70.360:FF:000002">
    <property type="entry name" value="Peptidase T"/>
    <property type="match status" value="1"/>
</dbReference>
<dbReference type="Gene3D" id="3.30.70.360">
    <property type="match status" value="1"/>
</dbReference>
<dbReference type="Gene3D" id="3.40.630.10">
    <property type="entry name" value="Zn peptidases"/>
    <property type="match status" value="1"/>
</dbReference>
<dbReference type="HAMAP" id="MF_00550">
    <property type="entry name" value="Aminopeptidase_M20"/>
    <property type="match status" value="1"/>
</dbReference>
<dbReference type="InterPro" id="IPR001261">
    <property type="entry name" value="ArgE/DapE_CS"/>
</dbReference>
<dbReference type="InterPro" id="IPR036264">
    <property type="entry name" value="Bact_exopeptidase_dim_dom"/>
</dbReference>
<dbReference type="InterPro" id="IPR002933">
    <property type="entry name" value="Peptidase_M20"/>
</dbReference>
<dbReference type="InterPro" id="IPR011650">
    <property type="entry name" value="Peptidase_M20_dimer"/>
</dbReference>
<dbReference type="InterPro" id="IPR010161">
    <property type="entry name" value="Peptidase_M20B"/>
</dbReference>
<dbReference type="NCBIfam" id="TIGR01882">
    <property type="entry name" value="peptidase-T"/>
    <property type="match status" value="1"/>
</dbReference>
<dbReference type="NCBIfam" id="NF003976">
    <property type="entry name" value="PRK05469.1"/>
    <property type="match status" value="1"/>
</dbReference>
<dbReference type="NCBIfam" id="NF009920">
    <property type="entry name" value="PRK13381.1"/>
    <property type="match status" value="1"/>
</dbReference>
<dbReference type="PANTHER" id="PTHR42994">
    <property type="entry name" value="PEPTIDASE T"/>
    <property type="match status" value="1"/>
</dbReference>
<dbReference type="PANTHER" id="PTHR42994:SF1">
    <property type="entry name" value="PEPTIDASE T"/>
    <property type="match status" value="1"/>
</dbReference>
<dbReference type="Pfam" id="PF07687">
    <property type="entry name" value="M20_dimer"/>
    <property type="match status" value="1"/>
</dbReference>
<dbReference type="Pfam" id="PF01546">
    <property type="entry name" value="Peptidase_M20"/>
    <property type="match status" value="1"/>
</dbReference>
<dbReference type="PIRSF" id="PIRSF037215">
    <property type="entry name" value="Peptidase_M20B"/>
    <property type="match status" value="1"/>
</dbReference>
<dbReference type="SUPFAM" id="SSF55031">
    <property type="entry name" value="Bacterial exopeptidase dimerisation domain"/>
    <property type="match status" value="1"/>
</dbReference>
<dbReference type="SUPFAM" id="SSF53187">
    <property type="entry name" value="Zn-dependent exopeptidases"/>
    <property type="match status" value="1"/>
</dbReference>
<dbReference type="PROSITE" id="PS00758">
    <property type="entry name" value="ARGE_DAPE_CPG2_1"/>
    <property type="match status" value="1"/>
</dbReference>
<dbReference type="PROSITE" id="PS00759">
    <property type="entry name" value="ARGE_DAPE_CPG2_2"/>
    <property type="match status" value="1"/>
</dbReference>
<proteinExistence type="inferred from homology"/>
<protein>
    <recommendedName>
        <fullName evidence="1">Peptidase T</fullName>
        <ecNumber evidence="1">3.4.11.4</ecNumber>
    </recommendedName>
    <alternativeName>
        <fullName evidence="1">Aminotripeptidase</fullName>
        <shortName evidence="1">Tripeptidase</shortName>
    </alternativeName>
    <alternativeName>
        <fullName evidence="1">Tripeptide aminopeptidase</fullName>
    </alternativeName>
</protein>
<keyword id="KW-0031">Aminopeptidase</keyword>
<keyword id="KW-0963">Cytoplasm</keyword>
<keyword id="KW-0378">Hydrolase</keyword>
<keyword id="KW-0479">Metal-binding</keyword>
<keyword id="KW-0482">Metalloprotease</keyword>
<keyword id="KW-0645">Protease</keyword>
<keyword id="KW-0862">Zinc</keyword>